<reference key="1">
    <citation type="submission" date="2002-10" db="EMBL/GenBank/DDBJ databases">
        <title>Retinal transdifferentiation in adult urodels: reproduction of retinal stem cells in vivo.</title>
        <authorList>
            <person name="Nakamura K."/>
            <person name="Kikuchi Y."/>
            <person name="Susaki K."/>
            <person name="Chiba C."/>
            <person name="Saito T."/>
        </authorList>
    </citation>
    <scope>NUCLEOTIDE SEQUENCE [MRNA]</scope>
</reference>
<name>RPE65_CYNPY</name>
<organism>
    <name type="scientific">Cynops pyrrhogaster</name>
    <name type="common">Japanese fire-bellied newt</name>
    <name type="synonym">Molge pyrrhogaster</name>
    <dbReference type="NCBI Taxonomy" id="8330"/>
    <lineage>
        <taxon>Eukaryota</taxon>
        <taxon>Metazoa</taxon>
        <taxon>Chordata</taxon>
        <taxon>Craniata</taxon>
        <taxon>Vertebrata</taxon>
        <taxon>Euteleostomi</taxon>
        <taxon>Amphibia</taxon>
        <taxon>Batrachia</taxon>
        <taxon>Caudata</taxon>
        <taxon>Salamandroidea</taxon>
        <taxon>Salamandridae</taxon>
        <taxon>Pleurodelinae</taxon>
        <taxon>Cynops</taxon>
    </lineage>
</organism>
<evidence type="ECO:0000250" key="1">
    <source>
        <dbReference type="UniProtKB" id="Q16518"/>
    </source>
</evidence>
<evidence type="ECO:0000250" key="2">
    <source>
        <dbReference type="UniProtKB" id="Q28175"/>
    </source>
</evidence>
<evidence type="ECO:0000305" key="3"/>
<gene>
    <name type="primary">RPE65</name>
</gene>
<accession>Q8AXN9</accession>
<protein>
    <recommendedName>
        <fullName>Retinoid isomerohydrolase</fullName>
        <ecNumber evidence="2">3.1.1.64</ecNumber>
    </recommendedName>
    <alternativeName>
        <fullName>All-trans-retinyl-palmitate hydrolase</fullName>
    </alternativeName>
    <alternativeName>
        <fullName>Lutein isomerase</fullName>
    </alternativeName>
    <alternativeName>
        <fullName>Meso-zeaxanthin isomerase</fullName>
        <ecNumber evidence="1">5.3.3.22</ecNumber>
    </alternativeName>
    <alternativeName>
        <fullName>Retinal pigment epithelium-specific 65 kDa protein</fullName>
    </alternativeName>
    <alternativeName>
        <fullName>Retinol isomerase</fullName>
    </alternativeName>
</protein>
<sequence length="533" mass="61264">MSSKVEHPAGGYKKLFETVEELASPITAHVTGRIPVWLTGSLLRCGPGLFEVGSEQFYHLFDGQALLHKFDFKEGHVTYHRRFIRTDTYVRAMTEKRIVITEFGTFAFPDPCKNIFSRFLSYFQGLEVTDNTLVNVYPVGEDYYACTETNYITKVNPETLETIKKVDLCNYVSINGVTAHPLIENDGTVYNIGNCFGKHFSFAYNIVKIPPLQEDKEDPINKAKVVVQFPCSERFKPSYVHSFGLTPNYIVFVEQPVKINLFKFLSSWSIWGANYMDCFESHETMGVWMHVAEKLTGEYLNIKYRTSAFNLFHHINTYEDHGFLIVDLCCWKGFEFIYNYLYLANMRENWEEVKRNAEKAPQPEVRRYVLPLDIHKVDTGKNLVNLPYTTATAILRSDETIWLEPEVLFSGPRLAFEFPQINYKKFGGKDYTFAYGLGLNHFVPDRLSKLNVKTKEIWVWQEPDSYPSEPIFVSQPDAMEEDDGVVLSVIVNPGPGQKPAFLLILNAKDMSEIARAEVDINIPVTFHGMYKKA</sequence>
<proteinExistence type="evidence at transcript level"/>
<keyword id="KW-0007">Acetylation</keyword>
<keyword id="KW-1003">Cell membrane</keyword>
<keyword id="KW-0378">Hydrolase</keyword>
<keyword id="KW-0408">Iron</keyword>
<keyword id="KW-0413">Isomerase</keyword>
<keyword id="KW-0443">Lipid metabolism</keyword>
<keyword id="KW-0449">Lipoprotein</keyword>
<keyword id="KW-0472">Membrane</keyword>
<keyword id="KW-0479">Metal-binding</keyword>
<keyword id="KW-0564">Palmitate</keyword>
<keyword id="KW-0597">Phosphoprotein</keyword>
<keyword id="KW-0716">Sensory transduction</keyword>
<keyword id="KW-0844">Vision</keyword>
<feature type="initiator methionine" description="Removed" evidence="2">
    <location>
        <position position="1"/>
    </location>
</feature>
<feature type="chain" id="PRO_0000143948" description="Retinoid isomerohydrolase">
    <location>
        <begin position="2"/>
        <end position="533"/>
    </location>
</feature>
<feature type="binding site" evidence="2">
    <location>
        <position position="180"/>
    </location>
    <ligand>
        <name>Fe cation</name>
        <dbReference type="ChEBI" id="CHEBI:24875"/>
        <note>catalytic</note>
    </ligand>
</feature>
<feature type="binding site" evidence="2">
    <location>
        <position position="241"/>
    </location>
    <ligand>
        <name>Fe cation</name>
        <dbReference type="ChEBI" id="CHEBI:24875"/>
        <note>catalytic</note>
    </ligand>
</feature>
<feature type="binding site" evidence="2">
    <location>
        <position position="313"/>
    </location>
    <ligand>
        <name>Fe cation</name>
        <dbReference type="ChEBI" id="CHEBI:24875"/>
        <note>catalytic</note>
    </ligand>
</feature>
<feature type="binding site" evidence="2">
    <location>
        <position position="527"/>
    </location>
    <ligand>
        <name>Fe cation</name>
        <dbReference type="ChEBI" id="CHEBI:24875"/>
        <note>catalytic</note>
    </ligand>
</feature>
<feature type="modified residue" description="N-acetylserine" evidence="2">
    <location>
        <position position="2"/>
    </location>
</feature>
<feature type="lipid moiety-binding region" description="S-palmitoyl cysteine; in membrane form" evidence="2">
    <location>
        <position position="112"/>
    </location>
</feature>
<feature type="lipid moiety-binding region" description="S-palmitoyl cysteine; in membrane form" evidence="2">
    <location>
        <position position="231"/>
    </location>
</feature>
<feature type="lipid moiety-binding region" description="S-palmitoyl cysteine; in membrane form" evidence="2">
    <location>
        <position position="329"/>
    </location>
</feature>
<feature type="lipid moiety-binding region" description="S-palmitoyl cysteine; in membrane form" evidence="2">
    <location>
        <position position="330"/>
    </location>
</feature>
<comment type="function">
    <text evidence="1 2">Critical isomerohydrolase in the retinoid cycle involved in regeneration of 11-cis-retinal, the chromophore of rod and cone opsins. Catalyzes the cleavage and isomerization of all-trans-retinyl fatty acid esters to 11-cis-retinol which is further oxidized by 11-cis retinol dehydrogenase to 11-cis-retinal for use as visual chromophore. Essential for the production of 11-cis retinal for both rod and cone photoreceptors. Also capable of catalyzing the isomerization of lutein to meso-zeaxanthin an eye-specific carotenoid. The soluble form binds vitamin A (all-trans-retinol), making it available for LRAT processing to all-trans-retinyl ester. The membrane form, palmitoylated by LRAT, binds all-trans-retinyl esters, making them available for IMH (isomerohydrolase) processing to all-cis-retinol. The soluble form is regenerated by transferring its palmitoyl groups onto 11-cis-retinol, a reaction catalyzed by LRAT.</text>
</comment>
<comment type="catalytic activity">
    <reaction evidence="2">
        <text>an all-trans-retinyl ester + H2O = 11-cis-retinol + a fatty acid + H(+)</text>
        <dbReference type="Rhea" id="RHEA:31771"/>
        <dbReference type="ChEBI" id="CHEBI:15377"/>
        <dbReference type="ChEBI" id="CHEBI:15378"/>
        <dbReference type="ChEBI" id="CHEBI:16302"/>
        <dbReference type="ChEBI" id="CHEBI:28868"/>
        <dbReference type="ChEBI" id="CHEBI:63410"/>
        <dbReference type="EC" id="3.1.1.64"/>
    </reaction>
</comment>
<comment type="catalytic activity">
    <reaction evidence="1">
        <text>lutein = (3R,3'S)-zeaxanthin</text>
        <dbReference type="Rhea" id="RHEA:12729"/>
        <dbReference type="ChEBI" id="CHEBI:28838"/>
        <dbReference type="ChEBI" id="CHEBI:138919"/>
        <dbReference type="EC" id="5.3.3.22"/>
    </reaction>
</comment>
<comment type="catalytic activity">
    <reaction evidence="1">
        <text>all-trans-retinyl hexadecanoate + H2O = 11-cis-retinol + hexadecanoate + H(+)</text>
        <dbReference type="Rhea" id="RHEA:31775"/>
        <dbReference type="ChEBI" id="CHEBI:7896"/>
        <dbReference type="ChEBI" id="CHEBI:15377"/>
        <dbReference type="ChEBI" id="CHEBI:15378"/>
        <dbReference type="ChEBI" id="CHEBI:16302"/>
        <dbReference type="ChEBI" id="CHEBI:17616"/>
        <dbReference type="EC" id="3.1.1.64"/>
    </reaction>
</comment>
<comment type="cofactor">
    <cofactor evidence="2">
        <name>Fe(2+)</name>
        <dbReference type="ChEBI" id="CHEBI:29033"/>
    </cofactor>
    <text evidence="2">Binds 1 Fe(2+) ion per subunit.</text>
</comment>
<comment type="subcellular location">
    <subcellularLocation>
        <location evidence="2">Cell membrane</location>
        <topology evidence="2">Lipid-anchor</topology>
    </subcellularLocation>
</comment>
<comment type="tissue specificity">
    <text>Retinal pigment epithelium specific.</text>
</comment>
<comment type="PTM">
    <text evidence="2">Palmitoylation by LRAT regulates ligand binding specificity; the palmitoylated form (membrane form) specifically binds all-trans-retinyl-palmitate, while the soluble unpalmitoylated form binds all-trans-retinol (vitamin A).</text>
</comment>
<comment type="similarity">
    <text evidence="3">Belongs to the carotenoid oxygenase family.</text>
</comment>
<dbReference type="EC" id="3.1.1.64" evidence="2"/>
<dbReference type="EC" id="5.3.3.22" evidence="1"/>
<dbReference type="EMBL" id="AB095018">
    <property type="protein sequence ID" value="BAC41351.1"/>
    <property type="molecule type" value="mRNA"/>
</dbReference>
<dbReference type="SMR" id="Q8AXN9"/>
<dbReference type="GO" id="GO:0005789">
    <property type="term" value="C:endoplasmic reticulum membrane"/>
    <property type="evidence" value="ECO:0000250"/>
    <property type="project" value="UniProtKB"/>
</dbReference>
<dbReference type="GO" id="GO:0016020">
    <property type="term" value="C:membrane"/>
    <property type="evidence" value="ECO:0000250"/>
    <property type="project" value="AgBase"/>
</dbReference>
<dbReference type="GO" id="GO:0005886">
    <property type="term" value="C:plasma membrane"/>
    <property type="evidence" value="ECO:0007669"/>
    <property type="project" value="UniProtKB-SubCell"/>
</dbReference>
<dbReference type="GO" id="GO:0052885">
    <property type="term" value="F:all-trans-retinyl-ester hydrolase, 11-cis retinol forming activity"/>
    <property type="evidence" value="ECO:0000250"/>
    <property type="project" value="AgBase"/>
</dbReference>
<dbReference type="GO" id="GO:0052884">
    <property type="term" value="F:all-trans-retinyl-palmitate hydrolase, 11-cis retinol forming activity"/>
    <property type="evidence" value="ECO:0000250"/>
    <property type="project" value="UniProtKB"/>
</dbReference>
<dbReference type="GO" id="GO:0003834">
    <property type="term" value="F:beta-carotene 15,15'-dioxygenase activity"/>
    <property type="evidence" value="ECO:0007669"/>
    <property type="project" value="TreeGrafter"/>
</dbReference>
<dbReference type="GO" id="GO:1901612">
    <property type="term" value="F:cardiolipin binding"/>
    <property type="evidence" value="ECO:0000250"/>
    <property type="project" value="AgBase"/>
</dbReference>
<dbReference type="GO" id="GO:0016853">
    <property type="term" value="F:isomerase activity"/>
    <property type="evidence" value="ECO:0000250"/>
    <property type="project" value="UniProtKB"/>
</dbReference>
<dbReference type="GO" id="GO:0046872">
    <property type="term" value="F:metal ion binding"/>
    <property type="evidence" value="ECO:0007669"/>
    <property type="project" value="UniProtKB-KW"/>
</dbReference>
<dbReference type="GO" id="GO:0031210">
    <property type="term" value="F:phosphatidylcholine binding"/>
    <property type="evidence" value="ECO:0000250"/>
    <property type="project" value="AgBase"/>
</dbReference>
<dbReference type="GO" id="GO:0001786">
    <property type="term" value="F:phosphatidylserine binding"/>
    <property type="evidence" value="ECO:0000250"/>
    <property type="project" value="AgBase"/>
</dbReference>
<dbReference type="GO" id="GO:0050251">
    <property type="term" value="F:retinol isomerase activity"/>
    <property type="evidence" value="ECO:0007669"/>
    <property type="project" value="TreeGrafter"/>
</dbReference>
<dbReference type="GO" id="GO:0042574">
    <property type="term" value="P:retinal metabolic process"/>
    <property type="evidence" value="ECO:0007669"/>
    <property type="project" value="TreeGrafter"/>
</dbReference>
<dbReference type="GO" id="GO:0001523">
    <property type="term" value="P:retinoid metabolic process"/>
    <property type="evidence" value="ECO:0000250"/>
    <property type="project" value="UniProtKB"/>
</dbReference>
<dbReference type="GO" id="GO:0007601">
    <property type="term" value="P:visual perception"/>
    <property type="evidence" value="ECO:0007669"/>
    <property type="project" value="UniProtKB-KW"/>
</dbReference>
<dbReference type="GO" id="GO:1901827">
    <property type="term" value="P:zeaxanthin biosynthetic process"/>
    <property type="evidence" value="ECO:0000250"/>
    <property type="project" value="UniProtKB"/>
</dbReference>
<dbReference type="InterPro" id="IPR004294">
    <property type="entry name" value="Carotenoid_Oase"/>
</dbReference>
<dbReference type="PANTHER" id="PTHR10543">
    <property type="entry name" value="BETA-CAROTENE DIOXYGENASE"/>
    <property type="match status" value="1"/>
</dbReference>
<dbReference type="PANTHER" id="PTHR10543:SF57">
    <property type="entry name" value="RETINOID ISOMEROHYDROLASE"/>
    <property type="match status" value="1"/>
</dbReference>
<dbReference type="Pfam" id="PF03055">
    <property type="entry name" value="RPE65"/>
    <property type="match status" value="1"/>
</dbReference>